<gene>
    <name evidence="2" type="primary">pont</name>
    <name type="ORF">GA17841</name>
</gene>
<evidence type="ECO:0000250" key="1"/>
<evidence type="ECO:0000250" key="2">
    <source>
        <dbReference type="UniProtKB" id="Q9VH07"/>
    </source>
</evidence>
<evidence type="ECO:0000250" key="3">
    <source>
        <dbReference type="UniProtKB" id="Q9Y230"/>
    </source>
</evidence>
<evidence type="ECO:0000305" key="4"/>
<evidence type="ECO:0000312" key="5">
    <source>
        <dbReference type="EMBL" id="EAL27340.1"/>
    </source>
</evidence>
<protein>
    <recommendedName>
        <fullName>RuvB-like helicase 1</fullName>
        <ecNumber>3.6.4.12</ecNumber>
    </recommendedName>
    <alternativeName>
        <fullName>Pontin</fullName>
    </alternativeName>
</protein>
<name>RUVB1_DROPS</name>
<sequence>MKIEEVKSTVRTQRIAAHSHVKGLGLDEAGSALQSAAGLVGQKAAREAAGIVVDLIKSKKMAGRALLLAGPPGTGKTAIALAIAQELGNKVPFCPMVGSEVFSNEIKKTEVLMENFRRSIGLRIRETKEVYEGEVTELTPVETENPMGGYGKTISNVVIGLKTAKGTKQLKLDPSIFDALQKEKVEVGDVIYIEANSGAVKRQGRSDTFATEFDLETEEYVPLPKGDVHKKKEVIQDVTLHDLDVANARPQGGQDVLSMVGQLMKPKKTEITDKLRMEINKVVNKYIDQGIAELVPGVLFIDEIHMLDLETFTYLHKSLESPIAPIVIFATNRGRCVIRGTTDIVSPHGIPLDLLDRLLIIRTLLYSTSDMEQIIKLRAQTEGLQLEDPAFARLSEIGTSSTLRYAVQLLTPAHQMCKVNGRTQITKDDIEDVHSLFLDAKRSSKHLSEKNNKFML</sequence>
<dbReference type="EC" id="3.6.4.12"/>
<dbReference type="EMBL" id="CM000070">
    <property type="protein sequence ID" value="EAL27340.1"/>
    <property type="status" value="ALT_SEQ"/>
    <property type="molecule type" value="Genomic_DNA"/>
</dbReference>
<dbReference type="RefSeq" id="XP_001358203.1">
    <property type="nucleotide sequence ID" value="XM_001358166.4"/>
</dbReference>
<dbReference type="SMR" id="Q29AK9"/>
<dbReference type="FunCoup" id="Q29AK9">
    <property type="interactions" value="1877"/>
</dbReference>
<dbReference type="STRING" id="46245.Q29AK9"/>
<dbReference type="EnsemblMetazoa" id="FBtr0284042">
    <property type="protein sequence ID" value="FBpp0282480"/>
    <property type="gene ID" value="FBgn0077850"/>
</dbReference>
<dbReference type="GeneID" id="4801035"/>
<dbReference type="KEGG" id="dpo:4801035"/>
<dbReference type="CTD" id="53439"/>
<dbReference type="eggNOG" id="KOG1942">
    <property type="taxonomic scope" value="Eukaryota"/>
</dbReference>
<dbReference type="HOGENOM" id="CLU_028311_1_1_1"/>
<dbReference type="InParanoid" id="Q29AK9"/>
<dbReference type="OMA" id="RTLPYNK"/>
<dbReference type="PhylomeDB" id="Q29AK9"/>
<dbReference type="Proteomes" id="UP000001819">
    <property type="component" value="Chromosome 2"/>
</dbReference>
<dbReference type="Bgee" id="FBgn0077850">
    <property type="expression patterns" value="Expressed in female reproductive system and 3 other cell types or tissues"/>
</dbReference>
<dbReference type="GO" id="GO:0005634">
    <property type="term" value="C:nucleus"/>
    <property type="evidence" value="ECO:0000250"/>
    <property type="project" value="UniProtKB"/>
</dbReference>
<dbReference type="GO" id="GO:0005524">
    <property type="term" value="F:ATP binding"/>
    <property type="evidence" value="ECO:0007669"/>
    <property type="project" value="UniProtKB-KW"/>
</dbReference>
<dbReference type="GO" id="GO:0016887">
    <property type="term" value="F:ATP hydrolysis activity"/>
    <property type="evidence" value="ECO:0007669"/>
    <property type="project" value="InterPro"/>
</dbReference>
<dbReference type="GO" id="GO:0008094">
    <property type="term" value="F:ATP-dependent activity, acting on DNA"/>
    <property type="evidence" value="ECO:0007669"/>
    <property type="project" value="InterPro"/>
</dbReference>
<dbReference type="GO" id="GO:0004386">
    <property type="term" value="F:helicase activity"/>
    <property type="evidence" value="ECO:0007669"/>
    <property type="project" value="UniProtKB-KW"/>
</dbReference>
<dbReference type="GO" id="GO:0003713">
    <property type="term" value="F:transcription coactivator activity"/>
    <property type="evidence" value="ECO:0000250"/>
    <property type="project" value="UniProtKB"/>
</dbReference>
<dbReference type="GO" id="GO:0051301">
    <property type="term" value="P:cell division"/>
    <property type="evidence" value="ECO:0007669"/>
    <property type="project" value="UniProtKB-KW"/>
</dbReference>
<dbReference type="GO" id="GO:0006325">
    <property type="term" value="P:chromatin organization"/>
    <property type="evidence" value="ECO:0007669"/>
    <property type="project" value="UniProtKB-KW"/>
</dbReference>
<dbReference type="GO" id="GO:0006310">
    <property type="term" value="P:DNA recombination"/>
    <property type="evidence" value="ECO:0007669"/>
    <property type="project" value="UniProtKB-KW"/>
</dbReference>
<dbReference type="GO" id="GO:0006281">
    <property type="term" value="P:DNA repair"/>
    <property type="evidence" value="ECO:0007669"/>
    <property type="project" value="UniProtKB-KW"/>
</dbReference>
<dbReference type="GO" id="GO:0090263">
    <property type="term" value="P:positive regulation of canonical Wnt signaling pathway"/>
    <property type="evidence" value="ECO:0000250"/>
    <property type="project" value="UniProtKB"/>
</dbReference>
<dbReference type="GO" id="GO:0042127">
    <property type="term" value="P:regulation of cell population proliferation"/>
    <property type="evidence" value="ECO:0000250"/>
    <property type="project" value="UniProtKB"/>
</dbReference>
<dbReference type="FunFam" id="1.10.8.60:FF:000010">
    <property type="entry name" value="RuvB-like helicase"/>
    <property type="match status" value="1"/>
</dbReference>
<dbReference type="FunFam" id="2.40.50.360:FF:000001">
    <property type="entry name" value="RuvB-like helicase"/>
    <property type="match status" value="1"/>
</dbReference>
<dbReference type="Gene3D" id="1.10.8.60">
    <property type="match status" value="1"/>
</dbReference>
<dbReference type="Gene3D" id="3.40.50.300">
    <property type="entry name" value="P-loop containing nucleotide triphosphate hydrolases"/>
    <property type="match status" value="1"/>
</dbReference>
<dbReference type="Gene3D" id="2.40.50.360">
    <property type="entry name" value="RuvB-like helicase, domain II"/>
    <property type="match status" value="1"/>
</dbReference>
<dbReference type="InterPro" id="IPR003593">
    <property type="entry name" value="AAA+_ATPase"/>
</dbReference>
<dbReference type="InterPro" id="IPR027417">
    <property type="entry name" value="P-loop_NTPase"/>
</dbReference>
<dbReference type="InterPro" id="IPR027238">
    <property type="entry name" value="RuvB-like"/>
</dbReference>
<dbReference type="InterPro" id="IPR041048">
    <property type="entry name" value="RuvB-like_C"/>
</dbReference>
<dbReference type="InterPro" id="IPR042487">
    <property type="entry name" value="RuvBL1/2_DNA/RNA_bd_dom"/>
</dbReference>
<dbReference type="InterPro" id="IPR010339">
    <property type="entry name" value="TIP49_P-loop"/>
</dbReference>
<dbReference type="PANTHER" id="PTHR11093">
    <property type="entry name" value="RUVB-RELATED REPTIN AND PONTIN"/>
    <property type="match status" value="1"/>
</dbReference>
<dbReference type="Pfam" id="PF06068">
    <property type="entry name" value="TIP49"/>
    <property type="match status" value="1"/>
</dbReference>
<dbReference type="Pfam" id="PF17856">
    <property type="entry name" value="TIP49_C"/>
    <property type="match status" value="1"/>
</dbReference>
<dbReference type="SMART" id="SM00382">
    <property type="entry name" value="AAA"/>
    <property type="match status" value="1"/>
</dbReference>
<dbReference type="SUPFAM" id="SSF52540">
    <property type="entry name" value="P-loop containing nucleoside triphosphate hydrolases"/>
    <property type="match status" value="1"/>
</dbReference>
<reference evidence="5" key="1">
    <citation type="journal article" date="2005" name="Genome Res.">
        <title>Comparative genome sequencing of Drosophila pseudoobscura: chromosomal, gene, and cis-element evolution.</title>
        <authorList>
            <person name="Richards S."/>
            <person name="Liu Y."/>
            <person name="Bettencourt B.R."/>
            <person name="Hradecky P."/>
            <person name="Letovsky S."/>
            <person name="Nielsen R."/>
            <person name="Thornton K."/>
            <person name="Hubisz M.J."/>
            <person name="Chen R."/>
            <person name="Meisel R.P."/>
            <person name="Couronne O."/>
            <person name="Hua S."/>
            <person name="Smith M.A."/>
            <person name="Zhang P."/>
            <person name="Liu J."/>
            <person name="Bussemaker H.J."/>
            <person name="van Batenburg M.F."/>
            <person name="Howells S.L."/>
            <person name="Scherer S.E."/>
            <person name="Sodergren E."/>
            <person name="Matthews B.B."/>
            <person name="Crosby M.A."/>
            <person name="Schroeder A.J."/>
            <person name="Ortiz-Barrientos D."/>
            <person name="Rives C.M."/>
            <person name="Metzker M.L."/>
            <person name="Muzny D.M."/>
            <person name="Scott G."/>
            <person name="Steffen D."/>
            <person name="Wheeler D.A."/>
            <person name="Worley K.C."/>
            <person name="Havlak P."/>
            <person name="Durbin K.J."/>
            <person name="Egan A."/>
            <person name="Gill R."/>
            <person name="Hume J."/>
            <person name="Morgan M.B."/>
            <person name="Miner G."/>
            <person name="Hamilton C."/>
            <person name="Huang Y."/>
            <person name="Waldron L."/>
            <person name="Verduzco D."/>
            <person name="Clerc-Blankenburg K.P."/>
            <person name="Dubchak I."/>
            <person name="Noor M.A.F."/>
            <person name="Anderson W."/>
            <person name="White K.P."/>
            <person name="Clark A.G."/>
            <person name="Schaeffer S.W."/>
            <person name="Gelbart W.M."/>
            <person name="Weinstock G.M."/>
            <person name="Gibbs R.A."/>
        </authorList>
    </citation>
    <scope>NUCLEOTIDE SEQUENCE [LARGE SCALE GENOMIC DNA]</scope>
    <source>
        <strain>MV2-25 / Tucson 14011-0121.94</strain>
    </source>
</reference>
<keyword id="KW-0010">Activator</keyword>
<keyword id="KW-0067">ATP-binding</keyword>
<keyword id="KW-0131">Cell cycle</keyword>
<keyword id="KW-0132">Cell division</keyword>
<keyword id="KW-0156">Chromatin regulator</keyword>
<keyword id="KW-0227">DNA damage</keyword>
<keyword id="KW-0233">DNA recombination</keyword>
<keyword id="KW-0234">DNA repair</keyword>
<keyword id="KW-0347">Helicase</keyword>
<keyword id="KW-0378">Hydrolase</keyword>
<keyword id="KW-0547">Nucleotide-binding</keyword>
<keyword id="KW-0539">Nucleus</keyword>
<keyword id="KW-1185">Reference proteome</keyword>
<keyword id="KW-0804">Transcription</keyword>
<keyword id="KW-0805">Transcription regulation</keyword>
<feature type="chain" id="PRO_0000306321" description="RuvB-like helicase 1">
    <location>
        <begin position="1"/>
        <end position="456"/>
    </location>
</feature>
<feature type="binding site" evidence="3">
    <location>
        <begin position="70"/>
        <end position="77"/>
    </location>
    <ligand>
        <name>ATP</name>
        <dbReference type="ChEBI" id="CHEBI:30616"/>
    </ligand>
</feature>
<proteinExistence type="inferred from homology"/>
<organism>
    <name type="scientific">Drosophila pseudoobscura pseudoobscura</name>
    <name type="common">Fruit fly</name>
    <dbReference type="NCBI Taxonomy" id="46245"/>
    <lineage>
        <taxon>Eukaryota</taxon>
        <taxon>Metazoa</taxon>
        <taxon>Ecdysozoa</taxon>
        <taxon>Arthropoda</taxon>
        <taxon>Hexapoda</taxon>
        <taxon>Insecta</taxon>
        <taxon>Pterygota</taxon>
        <taxon>Neoptera</taxon>
        <taxon>Endopterygota</taxon>
        <taxon>Diptera</taxon>
        <taxon>Brachycera</taxon>
        <taxon>Muscomorpha</taxon>
        <taxon>Ephydroidea</taxon>
        <taxon>Drosophilidae</taxon>
        <taxon>Drosophila</taxon>
        <taxon>Sophophora</taxon>
    </lineage>
</organism>
<accession>Q29AK9</accession>
<comment type="function">
    <text evidence="2">Acts as a transcriptional coactivator in Wg signaling caused by altered arm signaling. Pont and rept interfere antagonistically with nuclear arm signaling function, and are required to enhance or reduce arm activity, respectively. Also an essential cofactor for the normal function of Myc; required for cellular proliferation and growth (By similarity).</text>
</comment>
<comment type="function">
    <text evidence="1">Proposed core component of the chromatin remodeling Ino80 complex which is involved in transcriptional regulation, DNA replication and probably DNA repair.</text>
</comment>
<comment type="catalytic activity">
    <reaction>
        <text>ATP + H2O = ADP + phosphate + H(+)</text>
        <dbReference type="Rhea" id="RHEA:13065"/>
        <dbReference type="ChEBI" id="CHEBI:15377"/>
        <dbReference type="ChEBI" id="CHEBI:15378"/>
        <dbReference type="ChEBI" id="CHEBI:30616"/>
        <dbReference type="ChEBI" id="CHEBI:43474"/>
        <dbReference type="ChEBI" id="CHEBI:456216"/>
        <dbReference type="EC" id="3.6.4.12"/>
    </reaction>
</comment>
<comment type="subunit">
    <text evidence="1">Forms homohexameric rings. May form a dodecamer with rept made of two stacked hexameric rings (By similarity). Component of the chromatin remodeling Ino80 complex (By similarity).</text>
</comment>
<comment type="subcellular location">
    <subcellularLocation>
        <location evidence="2">Nucleus</location>
    </subcellularLocation>
</comment>
<comment type="similarity">
    <text evidence="4">Belongs to the RuvB family.</text>
</comment>
<comment type="sequence caution" evidence="4">
    <conflict type="erroneous gene model prediction">
        <sequence resource="EMBL-CDS" id="EAL27340"/>
    </conflict>
</comment>